<sequence>MRPLTARQQEVLDLLKRHLETTGMPPTRAEISRELGFKSANAAEEHLKALSRKGAIEIIPGASRGIRILDNSSNDEFDGLPLVGRVRAGEPILAEQHIEATYRVDADMFKPQADFLLKVYGLSMKNVGILDGDLLAVHSTKDVRNGQIVVARIEDEVTVKRLEKKGSIIYLHAENEEFDPIVVNLEEQKNFEIEGIAVGIIRNNAWM</sequence>
<name>LEXA_HAEIN</name>
<accession>P44858</accession>
<reference key="1">
    <citation type="journal article" date="1995" name="Science">
        <title>Whole-genome random sequencing and assembly of Haemophilus influenzae Rd.</title>
        <authorList>
            <person name="Fleischmann R.D."/>
            <person name="Adams M.D."/>
            <person name="White O."/>
            <person name="Clayton R.A."/>
            <person name="Kirkness E.F."/>
            <person name="Kerlavage A.R."/>
            <person name="Bult C.J."/>
            <person name="Tomb J.-F."/>
            <person name="Dougherty B.A."/>
            <person name="Merrick J.M."/>
            <person name="McKenney K."/>
            <person name="Sutton G.G."/>
            <person name="FitzHugh W."/>
            <person name="Fields C.A."/>
            <person name="Gocayne J.D."/>
            <person name="Scott J.D."/>
            <person name="Shirley R."/>
            <person name="Liu L.-I."/>
            <person name="Glodek A."/>
            <person name="Kelley J.M."/>
            <person name="Weidman J.F."/>
            <person name="Phillips C.A."/>
            <person name="Spriggs T."/>
            <person name="Hedblom E."/>
            <person name="Cotton M.D."/>
            <person name="Utterback T.R."/>
            <person name="Hanna M.C."/>
            <person name="Nguyen D.T."/>
            <person name="Saudek D.M."/>
            <person name="Brandon R.C."/>
            <person name="Fine L.D."/>
            <person name="Fritchman J.L."/>
            <person name="Fuhrmann J.L."/>
            <person name="Geoghagen N.S.M."/>
            <person name="Gnehm C.L."/>
            <person name="McDonald L.A."/>
            <person name="Small K.V."/>
            <person name="Fraser C.M."/>
            <person name="Smith H.O."/>
            <person name="Venter J.C."/>
        </authorList>
    </citation>
    <scope>NUCLEOTIDE SEQUENCE [LARGE SCALE GENOMIC DNA]</scope>
    <source>
        <strain>ATCC 51907 / DSM 11121 / KW20 / Rd</strain>
    </source>
</reference>
<organism>
    <name type="scientific">Haemophilus influenzae (strain ATCC 51907 / DSM 11121 / KW20 / Rd)</name>
    <dbReference type="NCBI Taxonomy" id="71421"/>
    <lineage>
        <taxon>Bacteria</taxon>
        <taxon>Pseudomonadati</taxon>
        <taxon>Pseudomonadota</taxon>
        <taxon>Gammaproteobacteria</taxon>
        <taxon>Pasteurellales</taxon>
        <taxon>Pasteurellaceae</taxon>
        <taxon>Haemophilus</taxon>
    </lineage>
</organism>
<keyword id="KW-0068">Autocatalytic cleavage</keyword>
<keyword id="KW-0227">DNA damage</keyword>
<keyword id="KW-0234">DNA repair</keyword>
<keyword id="KW-0235">DNA replication</keyword>
<keyword id="KW-0238">DNA-binding</keyword>
<keyword id="KW-0378">Hydrolase</keyword>
<keyword id="KW-1185">Reference proteome</keyword>
<keyword id="KW-0678">Repressor</keyword>
<keyword id="KW-0742">SOS response</keyword>
<keyword id="KW-0804">Transcription</keyword>
<keyword id="KW-0805">Transcription regulation</keyword>
<comment type="function">
    <text evidence="1">Represses a number of genes involved in the response to DNA damage (SOS response), including recA and lexA. In the presence of single-stranded DNA, RecA interacts with LexA causing an autocatalytic cleavage which disrupts the DNA-binding part of LexA, leading to derepression of the SOS regulon and eventually DNA repair.</text>
</comment>
<comment type="catalytic activity">
    <reaction evidence="1">
        <text>Hydrolysis of Ala-|-Gly bond in repressor LexA.</text>
        <dbReference type="EC" id="3.4.21.88"/>
    </reaction>
</comment>
<comment type="subunit">
    <text evidence="1">Homodimer.</text>
</comment>
<comment type="similarity">
    <text evidence="1">Belongs to the peptidase S24 family.</text>
</comment>
<comment type="sequence caution" evidence="2">
    <conflict type="erroneous initiation">
        <sequence resource="EMBL-CDS" id="AAC22408"/>
    </conflict>
</comment>
<protein>
    <recommendedName>
        <fullName evidence="1">LexA repressor</fullName>
        <ecNumber evidence="1">3.4.21.88</ecNumber>
    </recommendedName>
</protein>
<proteinExistence type="inferred from homology"/>
<gene>
    <name evidence="1" type="primary">lexA</name>
    <name type="ordered locus">HI_0749</name>
</gene>
<feature type="chain" id="PRO_0000170042" description="LexA repressor">
    <location>
        <begin position="1"/>
        <end position="207"/>
    </location>
</feature>
<feature type="DNA-binding region" description="H-T-H motif" evidence="1">
    <location>
        <begin position="28"/>
        <end position="48"/>
    </location>
</feature>
<feature type="active site" description="For autocatalytic cleavage activity" evidence="1">
    <location>
        <position position="123"/>
    </location>
</feature>
<feature type="active site" description="For autocatalytic cleavage activity" evidence="1">
    <location>
        <position position="160"/>
    </location>
</feature>
<feature type="site" description="Cleavage; by autolysis" evidence="1">
    <location>
        <begin position="88"/>
        <end position="89"/>
    </location>
</feature>
<dbReference type="EC" id="3.4.21.88" evidence="1"/>
<dbReference type="EMBL" id="L42023">
    <property type="protein sequence ID" value="AAC22408.1"/>
    <property type="status" value="ALT_INIT"/>
    <property type="molecule type" value="Genomic_DNA"/>
</dbReference>
<dbReference type="PIR" id="E64090">
    <property type="entry name" value="E64090"/>
</dbReference>
<dbReference type="RefSeq" id="NP_438908.2">
    <property type="nucleotide sequence ID" value="NC_000907.1"/>
</dbReference>
<dbReference type="SMR" id="P44858"/>
<dbReference type="STRING" id="71421.HI_0749"/>
<dbReference type="MEROPS" id="S24.001"/>
<dbReference type="EnsemblBacteria" id="AAC22408">
    <property type="protein sequence ID" value="AAC22408"/>
    <property type="gene ID" value="HI_0749"/>
</dbReference>
<dbReference type="KEGG" id="hin:HI_0749"/>
<dbReference type="PATRIC" id="fig|71421.8.peg.786"/>
<dbReference type="eggNOG" id="COG1974">
    <property type="taxonomic scope" value="Bacteria"/>
</dbReference>
<dbReference type="HOGENOM" id="CLU_066192_45_3_6"/>
<dbReference type="OrthoDB" id="9802364at2"/>
<dbReference type="PhylomeDB" id="P44858"/>
<dbReference type="BioCyc" id="HINF71421:G1GJ1-787-MONOMER"/>
<dbReference type="Proteomes" id="UP000000579">
    <property type="component" value="Chromosome"/>
</dbReference>
<dbReference type="CollecTF" id="EXPREG_00000ab0"/>
<dbReference type="GO" id="GO:0032993">
    <property type="term" value="C:protein-DNA complex"/>
    <property type="evidence" value="ECO:0000318"/>
    <property type="project" value="GO_Central"/>
</dbReference>
<dbReference type="GO" id="GO:0001217">
    <property type="term" value="F:DNA-binding transcription repressor activity"/>
    <property type="evidence" value="ECO:0000318"/>
    <property type="project" value="GO_Central"/>
</dbReference>
<dbReference type="GO" id="GO:0043565">
    <property type="term" value="F:sequence-specific DNA binding"/>
    <property type="evidence" value="ECO:0000318"/>
    <property type="project" value="GO_Central"/>
</dbReference>
<dbReference type="GO" id="GO:0004252">
    <property type="term" value="F:serine-type endopeptidase activity"/>
    <property type="evidence" value="ECO:0007669"/>
    <property type="project" value="UniProtKB-UniRule"/>
</dbReference>
<dbReference type="GO" id="GO:0006281">
    <property type="term" value="P:DNA repair"/>
    <property type="evidence" value="ECO:0007669"/>
    <property type="project" value="UniProtKB-UniRule"/>
</dbReference>
<dbReference type="GO" id="GO:0006260">
    <property type="term" value="P:DNA replication"/>
    <property type="evidence" value="ECO:0007669"/>
    <property type="project" value="UniProtKB-UniRule"/>
</dbReference>
<dbReference type="GO" id="GO:0045892">
    <property type="term" value="P:negative regulation of DNA-templated transcription"/>
    <property type="evidence" value="ECO:0000270"/>
    <property type="project" value="CollecTF"/>
</dbReference>
<dbReference type="GO" id="GO:0006508">
    <property type="term" value="P:proteolysis"/>
    <property type="evidence" value="ECO:0007669"/>
    <property type="project" value="InterPro"/>
</dbReference>
<dbReference type="GO" id="GO:0009432">
    <property type="term" value="P:SOS response"/>
    <property type="evidence" value="ECO:0000269"/>
    <property type="project" value="CollecTF"/>
</dbReference>
<dbReference type="CDD" id="cd06529">
    <property type="entry name" value="S24_LexA-like"/>
    <property type="match status" value="1"/>
</dbReference>
<dbReference type="FunFam" id="1.10.10.10:FF:000009">
    <property type="entry name" value="LexA repressor"/>
    <property type="match status" value="1"/>
</dbReference>
<dbReference type="FunFam" id="2.10.109.10:FF:000001">
    <property type="entry name" value="LexA repressor"/>
    <property type="match status" value="1"/>
</dbReference>
<dbReference type="Gene3D" id="2.10.109.10">
    <property type="entry name" value="Umud Fragment, subunit A"/>
    <property type="match status" value="1"/>
</dbReference>
<dbReference type="Gene3D" id="1.10.10.10">
    <property type="entry name" value="Winged helix-like DNA-binding domain superfamily/Winged helix DNA-binding domain"/>
    <property type="match status" value="1"/>
</dbReference>
<dbReference type="HAMAP" id="MF_00015">
    <property type="entry name" value="LexA"/>
    <property type="match status" value="1"/>
</dbReference>
<dbReference type="InterPro" id="IPR006200">
    <property type="entry name" value="LexA"/>
</dbReference>
<dbReference type="InterPro" id="IPR039418">
    <property type="entry name" value="LexA-like"/>
</dbReference>
<dbReference type="InterPro" id="IPR036286">
    <property type="entry name" value="LexA/Signal_pep-like_sf"/>
</dbReference>
<dbReference type="InterPro" id="IPR006199">
    <property type="entry name" value="LexA_DNA-bd_dom"/>
</dbReference>
<dbReference type="InterPro" id="IPR050077">
    <property type="entry name" value="LexA_repressor"/>
</dbReference>
<dbReference type="InterPro" id="IPR006197">
    <property type="entry name" value="Peptidase_S24_LexA"/>
</dbReference>
<dbReference type="InterPro" id="IPR015927">
    <property type="entry name" value="Peptidase_S24_S26A/B/C"/>
</dbReference>
<dbReference type="InterPro" id="IPR036388">
    <property type="entry name" value="WH-like_DNA-bd_sf"/>
</dbReference>
<dbReference type="InterPro" id="IPR036390">
    <property type="entry name" value="WH_DNA-bd_sf"/>
</dbReference>
<dbReference type="NCBIfam" id="TIGR00498">
    <property type="entry name" value="lexA"/>
    <property type="match status" value="1"/>
</dbReference>
<dbReference type="PANTHER" id="PTHR33516">
    <property type="entry name" value="LEXA REPRESSOR"/>
    <property type="match status" value="1"/>
</dbReference>
<dbReference type="PANTHER" id="PTHR33516:SF2">
    <property type="entry name" value="LEXA REPRESSOR-RELATED"/>
    <property type="match status" value="1"/>
</dbReference>
<dbReference type="Pfam" id="PF01726">
    <property type="entry name" value="LexA_DNA_bind"/>
    <property type="match status" value="1"/>
</dbReference>
<dbReference type="Pfam" id="PF00717">
    <property type="entry name" value="Peptidase_S24"/>
    <property type="match status" value="1"/>
</dbReference>
<dbReference type="PRINTS" id="PR00726">
    <property type="entry name" value="LEXASERPTASE"/>
</dbReference>
<dbReference type="SUPFAM" id="SSF51306">
    <property type="entry name" value="LexA/Signal peptidase"/>
    <property type="match status" value="1"/>
</dbReference>
<dbReference type="SUPFAM" id="SSF46785">
    <property type="entry name" value="Winged helix' DNA-binding domain"/>
    <property type="match status" value="1"/>
</dbReference>
<evidence type="ECO:0000255" key="1">
    <source>
        <dbReference type="HAMAP-Rule" id="MF_00015"/>
    </source>
</evidence>
<evidence type="ECO:0000305" key="2"/>